<reference key="1">
    <citation type="journal article" date="2005" name="J. Bacteriol.">
        <title>Whole-genome sequence analysis of Pseudomonas syringae pv. phaseolicola 1448A reveals divergence among pathovars in genes involved in virulence and transposition.</title>
        <authorList>
            <person name="Joardar V."/>
            <person name="Lindeberg M."/>
            <person name="Jackson R.W."/>
            <person name="Selengut J."/>
            <person name="Dodson R."/>
            <person name="Brinkac L.M."/>
            <person name="Daugherty S.C."/>
            <person name="DeBoy R.T."/>
            <person name="Durkin A.S."/>
            <person name="Gwinn Giglio M."/>
            <person name="Madupu R."/>
            <person name="Nelson W.C."/>
            <person name="Rosovitz M.J."/>
            <person name="Sullivan S.A."/>
            <person name="Crabtree J."/>
            <person name="Creasy T."/>
            <person name="Davidsen T.M."/>
            <person name="Haft D.H."/>
            <person name="Zafar N."/>
            <person name="Zhou L."/>
            <person name="Halpin R."/>
            <person name="Holley T."/>
            <person name="Khouri H.M."/>
            <person name="Feldblyum T.V."/>
            <person name="White O."/>
            <person name="Fraser C.M."/>
            <person name="Chatterjee A.K."/>
            <person name="Cartinhour S."/>
            <person name="Schneider D."/>
            <person name="Mansfield J.W."/>
            <person name="Collmer A."/>
            <person name="Buell R."/>
        </authorList>
    </citation>
    <scope>NUCLEOTIDE SEQUENCE [LARGE SCALE GENOMIC DNA]</scope>
    <source>
        <strain>1448A / Race 6</strain>
    </source>
</reference>
<dbReference type="EC" id="2.1.1.33" evidence="2"/>
<dbReference type="EMBL" id="CP000058">
    <property type="protein sequence ID" value="AAZ35120.1"/>
    <property type="molecule type" value="Genomic_DNA"/>
</dbReference>
<dbReference type="SMR" id="Q48CM0"/>
<dbReference type="KEGG" id="psp:PSPPH_4773"/>
<dbReference type="eggNOG" id="COG0220">
    <property type="taxonomic scope" value="Bacteria"/>
</dbReference>
<dbReference type="HOGENOM" id="CLU_050910_0_1_6"/>
<dbReference type="UniPathway" id="UPA00989"/>
<dbReference type="Proteomes" id="UP000000551">
    <property type="component" value="Chromosome"/>
</dbReference>
<dbReference type="GO" id="GO:0043527">
    <property type="term" value="C:tRNA methyltransferase complex"/>
    <property type="evidence" value="ECO:0007669"/>
    <property type="project" value="TreeGrafter"/>
</dbReference>
<dbReference type="GO" id="GO:0008176">
    <property type="term" value="F:tRNA (guanine(46)-N7)-methyltransferase activity"/>
    <property type="evidence" value="ECO:0007669"/>
    <property type="project" value="UniProtKB-UniRule"/>
</dbReference>
<dbReference type="CDD" id="cd02440">
    <property type="entry name" value="AdoMet_MTases"/>
    <property type="match status" value="1"/>
</dbReference>
<dbReference type="FunFam" id="3.40.50.150:FF:000035">
    <property type="entry name" value="tRNA (guanine-N(7)-)-methyltransferase"/>
    <property type="match status" value="1"/>
</dbReference>
<dbReference type="Gene3D" id="3.40.50.150">
    <property type="entry name" value="Vaccinia Virus protein VP39"/>
    <property type="match status" value="1"/>
</dbReference>
<dbReference type="HAMAP" id="MF_01057">
    <property type="entry name" value="tRNA_methyltr_TrmB"/>
    <property type="match status" value="1"/>
</dbReference>
<dbReference type="InterPro" id="IPR029063">
    <property type="entry name" value="SAM-dependent_MTases_sf"/>
</dbReference>
<dbReference type="InterPro" id="IPR003358">
    <property type="entry name" value="tRNA_(Gua-N-7)_MeTrfase_Trmb"/>
</dbReference>
<dbReference type="InterPro" id="IPR055361">
    <property type="entry name" value="tRNA_methyltr_TrmB_bact"/>
</dbReference>
<dbReference type="NCBIfam" id="TIGR00091">
    <property type="entry name" value="tRNA (guanosine(46)-N7)-methyltransferase TrmB"/>
    <property type="match status" value="1"/>
</dbReference>
<dbReference type="PANTHER" id="PTHR23417">
    <property type="entry name" value="3-DEOXY-D-MANNO-OCTULOSONIC-ACID TRANSFERASE/TRNA GUANINE-N 7 - -METHYLTRANSFERASE"/>
    <property type="match status" value="1"/>
</dbReference>
<dbReference type="PANTHER" id="PTHR23417:SF14">
    <property type="entry name" value="PENTACOTRIPEPTIDE-REPEAT REGION OF PRORP DOMAIN-CONTAINING PROTEIN"/>
    <property type="match status" value="1"/>
</dbReference>
<dbReference type="Pfam" id="PF02390">
    <property type="entry name" value="Methyltransf_4"/>
    <property type="match status" value="1"/>
</dbReference>
<dbReference type="SUPFAM" id="SSF53335">
    <property type="entry name" value="S-adenosyl-L-methionine-dependent methyltransferases"/>
    <property type="match status" value="1"/>
</dbReference>
<dbReference type="PROSITE" id="PS51625">
    <property type="entry name" value="SAM_MT_TRMB"/>
    <property type="match status" value="1"/>
</dbReference>
<organism>
    <name type="scientific">Pseudomonas savastanoi pv. phaseolicola (strain 1448A / Race 6)</name>
    <name type="common">Pseudomonas syringae pv. phaseolicola (strain 1448A / Race 6)</name>
    <dbReference type="NCBI Taxonomy" id="264730"/>
    <lineage>
        <taxon>Bacteria</taxon>
        <taxon>Pseudomonadati</taxon>
        <taxon>Pseudomonadota</taxon>
        <taxon>Gammaproteobacteria</taxon>
        <taxon>Pseudomonadales</taxon>
        <taxon>Pseudomonadaceae</taxon>
        <taxon>Pseudomonas</taxon>
    </lineage>
</organism>
<keyword id="KW-0489">Methyltransferase</keyword>
<keyword id="KW-0949">S-adenosyl-L-methionine</keyword>
<keyword id="KW-0808">Transferase</keyword>
<keyword id="KW-0819">tRNA processing</keyword>
<proteinExistence type="inferred from homology"/>
<comment type="function">
    <text evidence="2">Catalyzes the formation of N(7)-methylguanine at position 46 (m7G46) in tRNA.</text>
</comment>
<comment type="catalytic activity">
    <reaction evidence="2">
        <text>guanosine(46) in tRNA + S-adenosyl-L-methionine = N(7)-methylguanosine(46) in tRNA + S-adenosyl-L-homocysteine</text>
        <dbReference type="Rhea" id="RHEA:42708"/>
        <dbReference type="Rhea" id="RHEA-COMP:10188"/>
        <dbReference type="Rhea" id="RHEA-COMP:10189"/>
        <dbReference type="ChEBI" id="CHEBI:57856"/>
        <dbReference type="ChEBI" id="CHEBI:59789"/>
        <dbReference type="ChEBI" id="CHEBI:74269"/>
        <dbReference type="ChEBI" id="CHEBI:74480"/>
        <dbReference type="EC" id="2.1.1.33"/>
    </reaction>
</comment>
<comment type="pathway">
    <text evidence="2">tRNA modification; N(7)-methylguanine-tRNA biosynthesis.</text>
</comment>
<comment type="similarity">
    <text evidence="2">Belongs to the class I-like SAM-binding methyltransferase superfamily. TrmB family.</text>
</comment>
<sequence>MTDSHVPHPESPAVEEGEERPHRRIKSFVMRAGRMTEGQQRGLDQGLPLYGLSLTDAPVDFDQVFGRAAPRTLEIGFGMGHSLLEMAAAAPEHDFIGVEVHSPGVGALLNGVLTQGLTNVRVYDCDAIEVLNRCVADNSLDRLMLFFPDPWHKSRHHKRRIVQPEFAALVRSKLKVGGVFHMATDWGPYAEYMLEVMSVASGYRNQAEDNQYVPRPAERPITKFERRGEKLGHGVWDLKFEKVD</sequence>
<evidence type="ECO:0000250" key="1"/>
<evidence type="ECO:0000255" key="2">
    <source>
        <dbReference type="HAMAP-Rule" id="MF_01057"/>
    </source>
</evidence>
<evidence type="ECO:0000256" key="3">
    <source>
        <dbReference type="SAM" id="MobiDB-lite"/>
    </source>
</evidence>
<accession>Q48CM0</accession>
<protein>
    <recommendedName>
        <fullName evidence="2">tRNA (guanine-N(7)-)-methyltransferase</fullName>
        <ecNumber evidence="2">2.1.1.33</ecNumber>
    </recommendedName>
    <alternativeName>
        <fullName evidence="2">tRNA (guanine(46)-N(7))-methyltransferase</fullName>
    </alternativeName>
    <alternativeName>
        <fullName evidence="2">tRNA(m7G46)-methyltransferase</fullName>
    </alternativeName>
</protein>
<name>TRMB_PSE14</name>
<feature type="chain" id="PRO_0000229187" description="tRNA (guanine-N(7)-)-methyltransferase">
    <location>
        <begin position="1"/>
        <end position="244"/>
    </location>
</feature>
<feature type="region of interest" description="Disordered" evidence="3">
    <location>
        <begin position="1"/>
        <end position="24"/>
    </location>
</feature>
<feature type="active site" evidence="1">
    <location>
        <position position="149"/>
    </location>
</feature>
<feature type="binding site" evidence="2">
    <location>
        <position position="74"/>
    </location>
    <ligand>
        <name>S-adenosyl-L-methionine</name>
        <dbReference type="ChEBI" id="CHEBI:59789"/>
    </ligand>
</feature>
<feature type="binding site" evidence="2">
    <location>
        <position position="99"/>
    </location>
    <ligand>
        <name>S-adenosyl-L-methionine</name>
        <dbReference type="ChEBI" id="CHEBI:59789"/>
    </ligand>
</feature>
<feature type="binding site" evidence="2">
    <location>
        <position position="126"/>
    </location>
    <ligand>
        <name>S-adenosyl-L-methionine</name>
        <dbReference type="ChEBI" id="CHEBI:59789"/>
    </ligand>
</feature>
<feature type="binding site" evidence="2">
    <location>
        <position position="149"/>
    </location>
    <ligand>
        <name>S-adenosyl-L-methionine</name>
        <dbReference type="ChEBI" id="CHEBI:59789"/>
    </ligand>
</feature>
<feature type="binding site" evidence="2">
    <location>
        <position position="153"/>
    </location>
    <ligand>
        <name>substrate</name>
    </ligand>
</feature>
<feature type="binding site" evidence="2">
    <location>
        <position position="185"/>
    </location>
    <ligand>
        <name>substrate</name>
    </ligand>
</feature>
<feature type="binding site" evidence="2">
    <location>
        <begin position="222"/>
        <end position="225"/>
    </location>
    <ligand>
        <name>substrate</name>
    </ligand>
</feature>
<gene>
    <name evidence="2" type="primary">trmB</name>
    <name type="ordered locus">PSPPH_4773</name>
</gene>